<sequence>EDNLSDLEGKEEAGDWDGDDNVLTVAAFAILFILSFLYSTFVTVVKVQQ</sequence>
<evidence type="ECO:0000255" key="1"/>
<evidence type="ECO:0000269" key="2">
    <source>
    </source>
</evidence>
<evidence type="ECO:0000269" key="3">
    <source ref="2"/>
</evidence>
<evidence type="ECO:0000303" key="4">
    <source>
    </source>
</evidence>
<evidence type="ECO:0000305" key="5"/>
<comment type="subcellular location">
    <subcellularLocation>
        <location evidence="5">Membrane</location>
        <topology evidence="5">Multi-pass membrane protein</topology>
    </subcellularLocation>
</comment>
<comment type="tissue specificity">
    <text evidence="3">Expressed in the spleen. May also be expressed in other lymphoid tissues.</text>
</comment>
<dbReference type="SMR" id="P83978"/>
<dbReference type="GO" id="GO:0019814">
    <property type="term" value="C:immunoglobulin complex"/>
    <property type="evidence" value="ECO:0007669"/>
    <property type="project" value="UniProtKB-KW"/>
</dbReference>
<dbReference type="GO" id="GO:0016020">
    <property type="term" value="C:membrane"/>
    <property type="evidence" value="ECO:0007669"/>
    <property type="project" value="UniProtKB-SubCell"/>
</dbReference>
<dbReference type="GO" id="GO:0002250">
    <property type="term" value="P:adaptive immune response"/>
    <property type="evidence" value="ECO:0007669"/>
    <property type="project" value="UniProtKB-KW"/>
</dbReference>
<protein>
    <recommendedName>
        <fullName>IgW transmembrane form Tm2T7/Tm7T7/Tm3T3</fullName>
    </recommendedName>
</protein>
<organism>
    <name type="scientific">Heterodontus francisci</name>
    <name type="common">Horn shark</name>
    <name type="synonym">Cestracion francisci</name>
    <dbReference type="NCBI Taxonomy" id="7792"/>
    <lineage>
        <taxon>Eukaryota</taxon>
        <taxon>Metazoa</taxon>
        <taxon>Chordata</taxon>
        <taxon>Craniata</taxon>
        <taxon>Vertebrata</taxon>
        <taxon>Chondrichthyes</taxon>
        <taxon>Elasmobranchii</taxon>
        <taxon>Galeomorphii</taxon>
        <taxon>Heterodontoidea</taxon>
        <taxon>Heterodontiformes</taxon>
        <taxon>Heterodontidae</taxon>
        <taxon>Heterodontus</taxon>
    </lineage>
</organism>
<feature type="chain" id="PRO_0000059866" description="IgW transmembrane form Tm2T7/Tm7T7/Tm3T3">
    <location>
        <begin position="1" status="less than"/>
        <end position="49"/>
    </location>
</feature>
<feature type="transmembrane region" description="Helical" evidence="1">
    <location>
        <begin position="25"/>
        <end position="45"/>
    </location>
</feature>
<feature type="glycosylation site" description="N-linked (GlcNAc...) asparagine" evidence="1">
    <location>
        <position position="3"/>
    </location>
</feature>
<feature type="non-terminal residue" evidence="4">
    <location>
        <position position="1"/>
    </location>
</feature>
<name>IGW4_HETFR</name>
<keyword id="KW-1064">Adaptive immunity</keyword>
<keyword id="KW-0325">Glycoprotein</keyword>
<keyword id="KW-0391">Immunity</keyword>
<keyword id="KW-1280">Immunoglobulin</keyword>
<keyword id="KW-0472">Membrane</keyword>
<keyword id="KW-0812">Transmembrane</keyword>
<keyword id="KW-1133">Transmembrane helix</keyword>
<proteinExistence type="evidence at transcript level"/>
<reference evidence="5" key="1">
    <citation type="journal article" date="2004" name="J. Immunol.">
        <title>Unprecedented multiplicity of Ig transmembrane and secretory mRNA forms in the cartilaginous fish.</title>
        <authorList>
            <person name="Rumfelt L.L."/>
            <person name="Diaz M."/>
            <person name="Lohr R.L."/>
            <person name="Mochon E."/>
            <person name="Flajnik M.F."/>
        </authorList>
    </citation>
    <scope>NUCLEOTIDE SEQUENCE</scope>
    <source>
        <tissue evidence="2">Spleen</tissue>
    </source>
</reference>
<reference evidence="5" key="2">
    <citation type="submission" date="2004-01" db="UniProtKB">
        <authorList>
            <person name="Rumfelt L.L."/>
            <person name="Diaz M."/>
            <person name="Lohr R.L."/>
            <person name="Mochon E."/>
            <person name="Flajnik M.F."/>
        </authorList>
    </citation>
    <scope>TISSUE SPECIFICITY</scope>
</reference>
<accession>P83978</accession>
<accession>P83979</accession>
<accession>P83980</accession>